<accession>P30040</accession>
<accession>C9J183</accession>
<accession>Q3MJC3</accession>
<accession>Q6FHT4</accession>
<feature type="signal peptide" evidence="4 6">
    <location>
        <begin position="1"/>
        <end position="32"/>
    </location>
</feature>
<feature type="chain" id="PRO_0000021197" description="Endoplasmic reticulum resident protein 29">
    <location>
        <begin position="33"/>
        <end position="261"/>
    </location>
</feature>
<feature type="short sequence motif" description="Prevents secretion from ER" evidence="1">
    <location>
        <begin position="258"/>
        <end position="261"/>
    </location>
</feature>
<feature type="modified residue" description="Phosphotyrosine; by PKDCC" evidence="3">
    <location>
        <position position="64"/>
    </location>
</feature>
<feature type="modified residue" description="Phosphotyrosine; by PKDCC" evidence="3">
    <location>
        <position position="66"/>
    </location>
</feature>
<feature type="splice variant" id="VSP_045680" description="In isoform 2." evidence="5">
    <original>VIPKS</original>
    <variation>IMVTS</variation>
    <location>
        <begin position="49"/>
        <end position="53"/>
    </location>
</feature>
<feature type="splice variant" id="VSP_045681" description="In isoform 2." evidence="5">
    <location>
        <begin position="54"/>
        <end position="261"/>
    </location>
</feature>
<feature type="helix" evidence="7">
    <location>
        <begin position="45"/>
        <end position="49"/>
    </location>
</feature>
<feature type="helix" evidence="7">
    <location>
        <begin position="50"/>
        <end position="52"/>
    </location>
</feature>
<feature type="strand" evidence="7">
    <location>
        <begin position="54"/>
        <end position="60"/>
    </location>
</feature>
<feature type="helix" evidence="7">
    <location>
        <begin position="68"/>
        <end position="80"/>
    </location>
</feature>
<feature type="strand" evidence="7">
    <location>
        <begin position="86"/>
        <end position="91"/>
    </location>
</feature>
<feature type="strand" evidence="7">
    <location>
        <begin position="96"/>
        <end position="98"/>
    </location>
</feature>
<feature type="helix" evidence="7">
    <location>
        <begin position="102"/>
        <end position="107"/>
    </location>
</feature>
<feature type="helix" evidence="7">
    <location>
        <begin position="112"/>
        <end position="114"/>
    </location>
</feature>
<feature type="strand" evidence="7">
    <location>
        <begin position="116"/>
        <end position="122"/>
    </location>
</feature>
<feature type="helix" evidence="7">
    <location>
        <begin position="138"/>
        <end position="147"/>
    </location>
</feature>
<feature type="helix" evidence="8">
    <location>
        <begin position="159"/>
        <end position="170"/>
    </location>
</feature>
<feature type="helix" evidence="8">
    <location>
        <begin position="174"/>
        <end position="187"/>
    </location>
</feature>
<feature type="helix" evidence="8">
    <location>
        <begin position="188"/>
        <end position="190"/>
    </location>
</feature>
<feature type="helix" evidence="8">
    <location>
        <begin position="193"/>
        <end position="195"/>
    </location>
</feature>
<feature type="helix" evidence="8">
    <location>
        <begin position="196"/>
        <end position="212"/>
    </location>
</feature>
<feature type="helix" evidence="8">
    <location>
        <begin position="216"/>
        <end position="230"/>
    </location>
</feature>
<feature type="helix" evidence="8">
    <location>
        <begin position="235"/>
        <end position="249"/>
    </location>
</feature>
<evidence type="ECO:0000255" key="1">
    <source>
        <dbReference type="PROSITE-ProRule" id="PRU10138"/>
    </source>
</evidence>
<evidence type="ECO:0000269" key="2">
    <source>
    </source>
</evidence>
<evidence type="ECO:0000269" key="3">
    <source>
    </source>
</evidence>
<evidence type="ECO:0000269" key="4">
    <source>
    </source>
</evidence>
<evidence type="ECO:0000303" key="5">
    <source ref="2"/>
</evidence>
<evidence type="ECO:0007744" key="6">
    <source>
    </source>
</evidence>
<evidence type="ECO:0007829" key="7">
    <source>
        <dbReference type="PDB" id="2QC7"/>
    </source>
</evidence>
<evidence type="ECO:0007829" key="8">
    <source>
        <dbReference type="PDB" id="5V8Z"/>
    </source>
</evidence>
<comment type="function">
    <text>Does not seem to be a disulfide isomerase. Plays an important role in the processing of secretory proteins within the endoplasmic reticulum (ER), possibly by participating in the folding of proteins in the ER.</text>
</comment>
<comment type="subunit">
    <text evidence="2">Homodimer. Part of a large chaperone multiprotein complex comprising CABP1, DNAJB11, HSP90B1, HSPA5, HYOU, PDIA2, PDIA4, PPIB, SDF2L1, UGGT1 and very small amounts of ERP29, but not, or at very low levels, CALR nor CANX (PubMed:12475965).</text>
</comment>
<comment type="interaction">
    <interactant intactId="EBI-946830">
        <id>P30040</id>
    </interactant>
    <interactant intactId="EBI-10827839">
        <id>Q15848</id>
        <label>ADIPOQ</label>
    </interactant>
    <organismsDiffer>false</organismsDiffer>
    <experiments>3</experiments>
</comment>
<comment type="interaction">
    <interactant intactId="EBI-946830">
        <id>P30040</id>
    </interactant>
    <interactant intactId="EBI-3922513">
        <id>O95393</id>
        <label>BMP10</label>
    </interactant>
    <organismsDiffer>false</organismsDiffer>
    <experiments>3</experiments>
</comment>
<comment type="interaction">
    <interactant intactId="EBI-946830">
        <id>P30040</id>
    </interactant>
    <interactant intactId="EBI-2806959">
        <id>Q6ICB0</id>
        <label>DESI1</label>
    </interactant>
    <organismsDiffer>false</organismsDiffer>
    <experiments>3</experiments>
</comment>
<comment type="interaction">
    <interactant intactId="EBI-946830">
        <id>P30040</id>
    </interactant>
    <interactant intactId="EBI-713401">
        <id>Q9P0W2</id>
        <label>HMG20B</label>
    </interactant>
    <organismsDiffer>false</organismsDiffer>
    <experiments>6</experiments>
</comment>
<comment type="interaction">
    <interactant intactId="EBI-946830">
        <id>P30040</id>
    </interactant>
    <interactant intactId="EBI-10262547">
        <id>Q8IXM6</id>
        <label>NRM</label>
    </interactant>
    <organismsDiffer>false</organismsDiffer>
    <experiments>3</experiments>
</comment>
<comment type="interaction">
    <interactant intactId="EBI-946830">
        <id>P30040</id>
    </interactant>
    <interactant intactId="EBI-347996">
        <id>O43765</id>
        <label>SGTA</label>
    </interactant>
    <organismsDiffer>false</organismsDiffer>
    <experiments>3</experiments>
</comment>
<comment type="interaction">
    <interactant intactId="EBI-946830">
        <id>P30040</id>
    </interactant>
    <interactant intactId="EBI-744081">
        <id>Q96EQ0</id>
        <label>SGTB</label>
    </interactant>
    <organismsDiffer>false</organismsDiffer>
    <experiments>6</experiments>
</comment>
<comment type="interaction">
    <interactant intactId="EBI-946830">
        <id>P30040</id>
    </interactant>
    <interactant intactId="EBI-10281213">
        <id>Q969S0</id>
        <label>SLC35B4</label>
    </interactant>
    <organismsDiffer>false</organismsDiffer>
    <experiments>3</experiments>
</comment>
<comment type="interaction">
    <interactant intactId="EBI-946830">
        <id>P30040</id>
    </interactant>
    <interactant intactId="EBI-10314552">
        <id>Q9NVC3</id>
        <label>SLC38A7</label>
    </interactant>
    <organismsDiffer>false</organismsDiffer>
    <experiments>3</experiments>
</comment>
<comment type="interaction">
    <interactant intactId="EBI-946830">
        <id>P30040</id>
    </interactant>
    <interactant intactId="EBI-1045825">
        <id>P55061</id>
        <label>TMBIM6</label>
    </interactant>
    <organismsDiffer>false</organismsDiffer>
    <experiments>3</experiments>
</comment>
<comment type="interaction">
    <interactant intactId="EBI-946830">
        <id>P30040</id>
    </interactant>
    <interactant intactId="EBI-2548832">
        <id>Q8N661</id>
        <label>TMEM86B</label>
    </interactant>
    <organismsDiffer>false</organismsDiffer>
    <experiments>3</experiments>
</comment>
<comment type="interaction">
    <interactant intactId="EBI-946830">
        <id>P30040</id>
    </interactant>
    <interactant intactId="EBI-12195249">
        <id>Q5TGU0</id>
        <label>TSPO2</label>
    </interactant>
    <organismsDiffer>false</organismsDiffer>
    <experiments>3</experiments>
</comment>
<comment type="interaction">
    <interactant intactId="EBI-946830">
        <id>P30040</id>
    </interactant>
    <interactant intactId="EBI-10243654">
        <id>Q5BVD1</id>
        <label>TTMP</label>
    </interactant>
    <organismsDiffer>false</organismsDiffer>
    <experiments>3</experiments>
</comment>
<comment type="interaction">
    <interactant intactId="EBI-946830">
        <id>P30040</id>
    </interactant>
    <interactant intactId="EBI-741480">
        <id>Q9UMX0</id>
        <label>UBQLN1</label>
    </interactant>
    <organismsDiffer>false</organismsDiffer>
    <experiments>3</experiments>
</comment>
<comment type="interaction">
    <interactant intactId="EBI-946830">
        <id>P30040</id>
    </interactant>
    <interactant intactId="EBI-947187">
        <id>Q9UHD9</id>
        <label>UBQLN2</label>
    </interactant>
    <organismsDiffer>false</organismsDiffer>
    <experiments>3</experiments>
</comment>
<comment type="interaction">
    <interactant intactId="EBI-8762218">
        <id>PRO_0000021197</id>
    </interactant>
    <interactant intactId="EBI-917740">
        <id>P52555</id>
        <label>Erp29</label>
    </interactant>
    <organismsDiffer>true</organismsDiffer>
    <experiments>2</experiments>
</comment>
<comment type="subcellular location">
    <subcellularLocation>
        <location>Endoplasmic reticulum lumen</location>
    </subcellularLocation>
    <subcellularLocation>
        <location>Melanosome</location>
    </subcellularLocation>
    <text>Identified by mass spectrometry in melanosome fractions from stage I to stage IV.</text>
</comment>
<comment type="alternative products">
    <event type="alternative splicing"/>
    <isoform>
        <id>P30040-1</id>
        <name>1</name>
        <sequence type="displayed"/>
    </isoform>
    <isoform>
        <id>P30040-2</id>
        <name>2</name>
        <sequence type="described" ref="VSP_045680 VSP_045681"/>
    </isoform>
</comment>
<comment type="tissue specificity">
    <text>Ubiquitous. Mostly expressed in secretory tissues.</text>
</comment>
<sequence>MAAAVPRAAFLSPLLPLLLGFLLLSAPHGGSGLHTKGALPLDTVTFYKVIPKSKFVLVKFDTQYPYGEKQDEFKRLAENSASSDDLLVAEVGISDYGDKLNMELSEKYKLDKESYPVFYLFRDGDFENPVPYTGAVKVGAIQRWLKGQGVYLGMPGCLPVYDALAGEFIRASGVEARQALLKQGQDNLSSVKETQKKWAEQYLKIMGKILDQGEDFPASEMTRIARLIEKNKMSDGKKEELQKSLNILTAFQKKGAEKEEL</sequence>
<proteinExistence type="evidence at protein level"/>
<reference key="1">
    <citation type="journal article" date="1998" name="Eur. J. Biochem.">
        <title>ERp28, a human endoplasmic-reticulum-lumenal protein, is a member of the protein disulfide isomerase family but lacks a CXXC thioredoxin-box motif.</title>
        <authorList>
            <person name="Ferrari D.M."/>
            <person name="van Nguyen P."/>
            <person name="Kratzin H.D."/>
            <person name="Soeling H.D."/>
        </authorList>
    </citation>
    <scope>NUCLEOTIDE SEQUENCE [MRNA] (ISOFORM 1)</scope>
    <scope>CHARACTERIZATION</scope>
    <source>
        <tissue>Liver</tissue>
    </source>
</reference>
<reference key="2">
    <citation type="submission" date="2000-03" db="EMBL/GenBank/DDBJ databases">
        <title>The WashU-Merck EST project.</title>
        <authorList>
            <person name="Hillier L."/>
            <person name="Clark N."/>
            <person name="Dubuque T."/>
            <person name="Elliston K."/>
            <person name="Hawkins M."/>
            <person name="Holman M."/>
            <person name="Hultman M."/>
            <person name="Kucaba T."/>
            <person name="Le M."/>
            <person name="Lennon G."/>
            <person name="Marra M."/>
            <person name="Parsons J."/>
            <person name="Rifkin L."/>
            <person name="Rohlfing T."/>
            <person name="Soares M."/>
            <person name="Tan F."/>
            <person name="Trevaskis E."/>
            <person name="Waterston R."/>
            <person name="Williamson A."/>
            <person name="Wohldmann P."/>
            <person name="Wilson R."/>
        </authorList>
    </citation>
    <scope>NUCLEOTIDE SEQUENCE [LARGE SCALE MRNA] (ISOFORM 2)</scope>
    <source>
        <tissue>Testis</tissue>
    </source>
</reference>
<reference key="3">
    <citation type="submission" date="2004-06" db="EMBL/GenBank/DDBJ databases">
        <title>Cloning of human full open reading frames in Gateway(TM) system entry vector (pDONR201).</title>
        <authorList>
            <person name="Ebert L."/>
            <person name="Schick M."/>
            <person name="Neubert P."/>
            <person name="Schatten R."/>
            <person name="Henze S."/>
            <person name="Korn B."/>
        </authorList>
    </citation>
    <scope>NUCLEOTIDE SEQUENCE [LARGE SCALE MRNA] (ISOFORM 1)</scope>
</reference>
<reference key="4">
    <citation type="journal article" date="2006" name="Nature">
        <title>The finished DNA sequence of human chromosome 12.</title>
        <authorList>
            <person name="Scherer S.E."/>
            <person name="Muzny D.M."/>
            <person name="Buhay C.J."/>
            <person name="Chen R."/>
            <person name="Cree A."/>
            <person name="Ding Y."/>
            <person name="Dugan-Rocha S."/>
            <person name="Gill R."/>
            <person name="Gunaratne P."/>
            <person name="Harris R.A."/>
            <person name="Hawes A.C."/>
            <person name="Hernandez J."/>
            <person name="Hodgson A.V."/>
            <person name="Hume J."/>
            <person name="Jackson A."/>
            <person name="Khan Z.M."/>
            <person name="Kovar-Smith C."/>
            <person name="Lewis L.R."/>
            <person name="Lozado R.J."/>
            <person name="Metzker M.L."/>
            <person name="Milosavljevic A."/>
            <person name="Miner G.R."/>
            <person name="Montgomery K.T."/>
            <person name="Morgan M.B."/>
            <person name="Nazareth L.V."/>
            <person name="Scott G."/>
            <person name="Sodergren E."/>
            <person name="Song X.-Z."/>
            <person name="Steffen D."/>
            <person name="Lovering R.C."/>
            <person name="Wheeler D.A."/>
            <person name="Worley K.C."/>
            <person name="Yuan Y."/>
            <person name="Zhang Z."/>
            <person name="Adams C.Q."/>
            <person name="Ansari-Lari M.A."/>
            <person name="Ayele M."/>
            <person name="Brown M.J."/>
            <person name="Chen G."/>
            <person name="Chen Z."/>
            <person name="Clerc-Blankenburg K.P."/>
            <person name="Davis C."/>
            <person name="Delgado O."/>
            <person name="Dinh H.H."/>
            <person name="Draper H."/>
            <person name="Gonzalez-Garay M.L."/>
            <person name="Havlak P."/>
            <person name="Jackson L.R."/>
            <person name="Jacob L.S."/>
            <person name="Kelly S.H."/>
            <person name="Li L."/>
            <person name="Li Z."/>
            <person name="Liu J."/>
            <person name="Liu W."/>
            <person name="Lu J."/>
            <person name="Maheshwari M."/>
            <person name="Nguyen B.-V."/>
            <person name="Okwuonu G.O."/>
            <person name="Pasternak S."/>
            <person name="Perez L.M."/>
            <person name="Plopper F.J.H."/>
            <person name="Santibanez J."/>
            <person name="Shen H."/>
            <person name="Tabor P.E."/>
            <person name="Verduzco D."/>
            <person name="Waldron L."/>
            <person name="Wang Q."/>
            <person name="Williams G.A."/>
            <person name="Zhang J."/>
            <person name="Zhou J."/>
            <person name="Allen C.C."/>
            <person name="Amin A.G."/>
            <person name="Anyalebechi V."/>
            <person name="Bailey M."/>
            <person name="Barbaria J.A."/>
            <person name="Bimage K.E."/>
            <person name="Bryant N.P."/>
            <person name="Burch P.E."/>
            <person name="Burkett C.E."/>
            <person name="Burrell K.L."/>
            <person name="Calderon E."/>
            <person name="Cardenas V."/>
            <person name="Carter K."/>
            <person name="Casias K."/>
            <person name="Cavazos I."/>
            <person name="Cavazos S.R."/>
            <person name="Ceasar H."/>
            <person name="Chacko J."/>
            <person name="Chan S.N."/>
            <person name="Chavez D."/>
            <person name="Christopoulos C."/>
            <person name="Chu J."/>
            <person name="Cockrell R."/>
            <person name="Cox C.D."/>
            <person name="Dang M."/>
            <person name="Dathorne S.R."/>
            <person name="David R."/>
            <person name="Davis C.M."/>
            <person name="Davy-Carroll L."/>
            <person name="Deshazo D.R."/>
            <person name="Donlin J.E."/>
            <person name="D'Souza L."/>
            <person name="Eaves K.A."/>
            <person name="Egan A."/>
            <person name="Emery-Cohen A.J."/>
            <person name="Escotto M."/>
            <person name="Flagg N."/>
            <person name="Forbes L.D."/>
            <person name="Gabisi A.M."/>
            <person name="Garza M."/>
            <person name="Hamilton C."/>
            <person name="Henderson N."/>
            <person name="Hernandez O."/>
            <person name="Hines S."/>
            <person name="Hogues M.E."/>
            <person name="Huang M."/>
            <person name="Idlebird D.G."/>
            <person name="Johnson R."/>
            <person name="Jolivet A."/>
            <person name="Jones S."/>
            <person name="Kagan R."/>
            <person name="King L.M."/>
            <person name="Leal B."/>
            <person name="Lebow H."/>
            <person name="Lee S."/>
            <person name="LeVan J.M."/>
            <person name="Lewis L.C."/>
            <person name="London P."/>
            <person name="Lorensuhewa L.M."/>
            <person name="Loulseged H."/>
            <person name="Lovett D.A."/>
            <person name="Lucier A."/>
            <person name="Lucier R.L."/>
            <person name="Ma J."/>
            <person name="Madu R.C."/>
            <person name="Mapua P."/>
            <person name="Martindale A.D."/>
            <person name="Martinez E."/>
            <person name="Massey E."/>
            <person name="Mawhiney S."/>
            <person name="Meador M.G."/>
            <person name="Mendez S."/>
            <person name="Mercado C."/>
            <person name="Mercado I.C."/>
            <person name="Merritt C.E."/>
            <person name="Miner Z.L."/>
            <person name="Minja E."/>
            <person name="Mitchell T."/>
            <person name="Mohabbat F."/>
            <person name="Mohabbat K."/>
            <person name="Montgomery B."/>
            <person name="Moore N."/>
            <person name="Morris S."/>
            <person name="Munidasa M."/>
            <person name="Ngo R.N."/>
            <person name="Nguyen N.B."/>
            <person name="Nickerson E."/>
            <person name="Nwaokelemeh O.O."/>
            <person name="Nwokenkwo S."/>
            <person name="Obregon M."/>
            <person name="Oguh M."/>
            <person name="Oragunye N."/>
            <person name="Oviedo R.J."/>
            <person name="Parish B.J."/>
            <person name="Parker D.N."/>
            <person name="Parrish J."/>
            <person name="Parks K.L."/>
            <person name="Paul H.A."/>
            <person name="Payton B.A."/>
            <person name="Perez A."/>
            <person name="Perrin W."/>
            <person name="Pickens A."/>
            <person name="Primus E.L."/>
            <person name="Pu L.-L."/>
            <person name="Puazo M."/>
            <person name="Quiles M.M."/>
            <person name="Quiroz J.B."/>
            <person name="Rabata D."/>
            <person name="Reeves K."/>
            <person name="Ruiz S.J."/>
            <person name="Shao H."/>
            <person name="Sisson I."/>
            <person name="Sonaike T."/>
            <person name="Sorelle R.P."/>
            <person name="Sutton A.E."/>
            <person name="Svatek A.F."/>
            <person name="Svetz L.A."/>
            <person name="Tamerisa K.S."/>
            <person name="Taylor T.R."/>
            <person name="Teague B."/>
            <person name="Thomas N."/>
            <person name="Thorn R.D."/>
            <person name="Trejos Z.Y."/>
            <person name="Trevino B.K."/>
            <person name="Ukegbu O.N."/>
            <person name="Urban J.B."/>
            <person name="Vasquez L.I."/>
            <person name="Vera V.A."/>
            <person name="Villasana D.M."/>
            <person name="Wang L."/>
            <person name="Ward-Moore S."/>
            <person name="Warren J.T."/>
            <person name="Wei X."/>
            <person name="White F."/>
            <person name="Williamson A.L."/>
            <person name="Wleczyk R."/>
            <person name="Wooden H.S."/>
            <person name="Wooden S.H."/>
            <person name="Yen J."/>
            <person name="Yoon L."/>
            <person name="Yoon V."/>
            <person name="Zorrilla S.E."/>
            <person name="Nelson D."/>
            <person name="Kucherlapati R."/>
            <person name="Weinstock G."/>
            <person name="Gibbs R.A."/>
        </authorList>
    </citation>
    <scope>NUCLEOTIDE SEQUENCE [LARGE SCALE GENOMIC DNA]</scope>
</reference>
<reference key="5">
    <citation type="journal article" date="2004" name="Genome Res.">
        <title>The status, quality, and expansion of the NIH full-length cDNA project: the Mammalian Gene Collection (MGC).</title>
        <authorList>
            <consortium name="The MGC Project Team"/>
        </authorList>
    </citation>
    <scope>NUCLEOTIDE SEQUENCE [LARGE SCALE MRNA] (ISOFORM 1)</scope>
    <source>
        <tissue>Lung</tissue>
    </source>
</reference>
<reference key="6">
    <citation type="journal article" date="1993" name="Electrophoresis">
        <title>Human liver protein map: update 1993.</title>
        <authorList>
            <person name="Hughes G.J."/>
            <person name="Frutiger S."/>
            <person name="Paquet N."/>
            <person name="Pasquali C."/>
            <person name="Sanchez J.-C."/>
            <person name="Tissot J.-D."/>
            <person name="Bairoch A."/>
            <person name="Appel R.D."/>
            <person name="Hochstrasser D.F."/>
        </authorList>
    </citation>
    <scope>PROTEIN SEQUENCE OF 33-52</scope>
    <source>
        <tissue>Liver</tissue>
    </source>
</reference>
<reference key="7">
    <citation type="journal article" date="1992" name="Electrophoresis">
        <title>Human liver protein map: a reference database established by microsequencing and gel comparison.</title>
        <authorList>
            <person name="Hochstrasser D.F."/>
            <person name="Frutiger S."/>
            <person name="Paquet N."/>
            <person name="Bairoch A."/>
            <person name="Ravier F."/>
            <person name="Pasquali C."/>
            <person name="Sanchez J.-C."/>
            <person name="Tissot J.-D."/>
            <person name="Bjellqvist B."/>
            <person name="Vargas R."/>
            <person name="Appel R.D."/>
            <person name="Hughes G.J."/>
        </authorList>
    </citation>
    <scope>PRELIMINARY PROTEIN SEQUENCE OF 33-42</scope>
    <source>
        <tissue>Liver</tissue>
    </source>
</reference>
<reference key="8">
    <citation type="submission" date="2007-03" db="UniProtKB">
        <authorList>
            <person name="Lubec G."/>
            <person name="Vishwanath V."/>
        </authorList>
    </citation>
    <scope>PROTEIN SEQUENCE OF 113-122</scope>
    <scope>IDENTIFICATION BY MASS SPECTROMETRY</scope>
    <source>
        <tissue>Brain</tissue>
        <tissue>Cajal-Retzius cell</tissue>
    </source>
</reference>
<reference key="9">
    <citation type="submission" date="1998-12" db="UniProtKB">
        <authorList>
            <person name="Hubbard M.J."/>
        </authorList>
    </citation>
    <scope>PARTIAL PROTEIN SEQUENCE</scope>
    <source>
        <tissue>Liver</tissue>
    </source>
</reference>
<reference key="10">
    <citation type="journal article" date="2000" name="Electrophoresis">
        <title>Human ERp29: isolation, primary structural characterisation and two-dimensional gel mapping.</title>
        <authorList>
            <person name="Hubbard M.J."/>
            <person name="McHugh N.J."/>
        </authorList>
    </citation>
    <scope>PARTIAL PROTEIN SEQUENCE</scope>
    <scope>CHARACTERIZATION</scope>
    <source>
        <tissue>Liver</tissue>
    </source>
</reference>
<reference key="11">
    <citation type="journal article" date="2002" name="Mol. Biol. Cell">
        <title>A subset of chaperones and folding enzymes form multiprotein complexes in endoplasmic reticulum to bind nascent proteins.</title>
        <authorList>
            <person name="Meunier L."/>
            <person name="Usherwood Y.-K."/>
            <person name="Chung K.T."/>
            <person name="Hendershot L.M."/>
        </authorList>
    </citation>
    <scope>COMPONENT OF A CHAPERONE COMPLEX</scope>
</reference>
<reference key="12">
    <citation type="journal article" date="2003" name="J. Proteome Res.">
        <title>Proteomic analysis of early melanosomes: identification of novel melanosomal proteins.</title>
        <authorList>
            <person name="Basrur V."/>
            <person name="Yang F."/>
            <person name="Kushimoto T."/>
            <person name="Higashimoto Y."/>
            <person name="Yasumoto K."/>
            <person name="Valencia J."/>
            <person name="Muller J."/>
            <person name="Vieira W.D."/>
            <person name="Watabe H."/>
            <person name="Shabanowitz J."/>
            <person name="Hearing V.J."/>
            <person name="Hunt D.F."/>
            <person name="Appella E."/>
        </authorList>
    </citation>
    <scope>SUBCELLULAR LOCATION [LARGE SCALE ANALYSIS]</scope>
    <source>
        <tissue>Melanoma</tissue>
    </source>
</reference>
<reference key="13">
    <citation type="journal article" date="2006" name="J. Proteome Res.">
        <title>Proteomic and bioinformatic characterization of the biogenesis and function of melanosomes.</title>
        <authorList>
            <person name="Chi A."/>
            <person name="Valencia J.C."/>
            <person name="Hu Z.-Z."/>
            <person name="Watabe H."/>
            <person name="Yamaguchi H."/>
            <person name="Mangini N.J."/>
            <person name="Huang H."/>
            <person name="Canfield V.A."/>
            <person name="Cheng K.C."/>
            <person name="Yang F."/>
            <person name="Abe R."/>
            <person name="Yamagishi S."/>
            <person name="Shabanowitz J."/>
            <person name="Hearing V.J."/>
            <person name="Wu C."/>
            <person name="Appella E."/>
            <person name="Hunt D.F."/>
        </authorList>
    </citation>
    <scope>SUBCELLULAR LOCATION [LARGE SCALE ANALYSIS]</scope>
    <source>
        <tissue>Melanoma</tissue>
    </source>
</reference>
<reference key="14">
    <citation type="journal article" date="2010" name="Sci. Signal.">
        <title>Quantitative phosphoproteomics reveals widespread full phosphorylation site occupancy during mitosis.</title>
        <authorList>
            <person name="Olsen J.V."/>
            <person name="Vermeulen M."/>
            <person name="Santamaria A."/>
            <person name="Kumar C."/>
            <person name="Miller M.L."/>
            <person name="Jensen L.J."/>
            <person name="Gnad F."/>
            <person name="Cox J."/>
            <person name="Jensen T.S."/>
            <person name="Nigg E.A."/>
            <person name="Brunak S."/>
            <person name="Mann M."/>
        </authorList>
    </citation>
    <scope>IDENTIFICATION BY MASS SPECTROMETRY [LARGE SCALE ANALYSIS]</scope>
    <source>
        <tissue>Cervix carcinoma</tissue>
    </source>
</reference>
<reference key="15">
    <citation type="journal article" date="2011" name="BMC Syst. Biol.">
        <title>Initial characterization of the human central proteome.</title>
        <authorList>
            <person name="Burkard T.R."/>
            <person name="Planyavsky M."/>
            <person name="Kaupe I."/>
            <person name="Breitwieser F.P."/>
            <person name="Buerckstuemmer T."/>
            <person name="Bennett K.L."/>
            <person name="Superti-Furga G."/>
            <person name="Colinge J."/>
        </authorList>
    </citation>
    <scope>IDENTIFICATION BY MASS SPECTROMETRY [LARGE SCALE ANALYSIS]</scope>
</reference>
<reference key="16">
    <citation type="journal article" date="2014" name="Cell">
        <title>A secreted tyrosine kinase acts in the extracellular environment.</title>
        <authorList>
            <person name="Bordoli M.R."/>
            <person name="Yum J."/>
            <person name="Breitkopf S.B."/>
            <person name="Thon J.N."/>
            <person name="Italiano J.E. Jr."/>
            <person name="Xiao J."/>
            <person name="Worby C."/>
            <person name="Wong S.K."/>
            <person name="Lin G."/>
            <person name="Edenius M."/>
            <person name="Keller T.L."/>
            <person name="Asara J.M."/>
            <person name="Dixon J.E."/>
            <person name="Yeo C.Y."/>
            <person name="Whitman M."/>
        </authorList>
    </citation>
    <scope>PHOSPHORYLATION AT TYR-64 AND TYR-66</scope>
</reference>
<reference key="17">
    <citation type="journal article" date="2014" name="J. Proteomics">
        <title>An enzyme assisted RP-RPLC approach for in-depth analysis of human liver phosphoproteome.</title>
        <authorList>
            <person name="Bian Y."/>
            <person name="Song C."/>
            <person name="Cheng K."/>
            <person name="Dong M."/>
            <person name="Wang F."/>
            <person name="Huang J."/>
            <person name="Sun D."/>
            <person name="Wang L."/>
            <person name="Ye M."/>
            <person name="Zou H."/>
        </authorList>
    </citation>
    <scope>IDENTIFICATION BY MASS SPECTROMETRY [LARGE SCALE ANALYSIS]</scope>
    <source>
        <tissue>Liver</tissue>
    </source>
</reference>
<reference key="18">
    <citation type="journal article" date="2015" name="Proteomics">
        <title>N-terminome analysis of the human mitochondrial proteome.</title>
        <authorList>
            <person name="Vaca Jacome A.S."/>
            <person name="Rabilloud T."/>
            <person name="Schaeffer-Reiss C."/>
            <person name="Rompais M."/>
            <person name="Ayoub D."/>
            <person name="Lane L."/>
            <person name="Bairoch A."/>
            <person name="Van Dorsselaer A."/>
            <person name="Carapito C."/>
        </authorList>
    </citation>
    <scope>CLEAVAGE OF SIGNAL PEPTIDE [LARGE SCALE ANALYSIS] AFTER GLY-32</scope>
    <scope>IDENTIFICATION BY MASS SPECTROMETRY [LARGE SCALE ANALYSIS]</scope>
</reference>
<protein>
    <recommendedName>
        <fullName>Endoplasmic reticulum resident protein 29</fullName>
        <shortName>ERp29</shortName>
    </recommendedName>
    <alternativeName>
        <fullName>Endoplasmic reticulum resident protein 28</fullName>
        <shortName>ERp28</shortName>
    </alternativeName>
    <alternativeName>
        <fullName>Endoplasmic reticulum resident protein 31</fullName>
        <shortName>ERp31</shortName>
    </alternativeName>
</protein>
<organism>
    <name type="scientific">Homo sapiens</name>
    <name type="common">Human</name>
    <dbReference type="NCBI Taxonomy" id="9606"/>
    <lineage>
        <taxon>Eukaryota</taxon>
        <taxon>Metazoa</taxon>
        <taxon>Chordata</taxon>
        <taxon>Craniata</taxon>
        <taxon>Vertebrata</taxon>
        <taxon>Euteleostomi</taxon>
        <taxon>Mammalia</taxon>
        <taxon>Eutheria</taxon>
        <taxon>Euarchontoglires</taxon>
        <taxon>Primates</taxon>
        <taxon>Haplorrhini</taxon>
        <taxon>Catarrhini</taxon>
        <taxon>Hominidae</taxon>
        <taxon>Homo</taxon>
    </lineage>
</organism>
<keyword id="KW-0002">3D-structure</keyword>
<keyword id="KW-0025">Alternative splicing</keyword>
<keyword id="KW-0903">Direct protein sequencing</keyword>
<keyword id="KW-0256">Endoplasmic reticulum</keyword>
<keyword id="KW-0597">Phosphoprotein</keyword>
<keyword id="KW-1267">Proteomics identification</keyword>
<keyword id="KW-1185">Reference proteome</keyword>
<keyword id="KW-0732">Signal</keyword>
<gene>
    <name type="primary">ERP29</name>
    <name type="synonym">C12orf8</name>
    <name type="synonym">ERP28</name>
</gene>
<dbReference type="EMBL" id="X94910">
    <property type="protein sequence ID" value="CAA64397.1"/>
    <property type="molecule type" value="mRNA"/>
</dbReference>
<dbReference type="EMBL" id="AA412124">
    <property type="status" value="NOT_ANNOTATED_CDS"/>
    <property type="molecule type" value="mRNA"/>
</dbReference>
<dbReference type="EMBL" id="CR541667">
    <property type="protein sequence ID" value="CAG46468.1"/>
    <property type="molecule type" value="mRNA"/>
</dbReference>
<dbReference type="EMBL" id="AC073575">
    <property type="status" value="NOT_ANNOTATED_CDS"/>
    <property type="molecule type" value="Genomic_DNA"/>
</dbReference>
<dbReference type="EMBL" id="BC101493">
    <property type="protein sequence ID" value="AAI01494.1"/>
    <property type="molecule type" value="mRNA"/>
</dbReference>
<dbReference type="EMBL" id="BC101495">
    <property type="protein sequence ID" value="AAI01496.1"/>
    <property type="molecule type" value="mRNA"/>
</dbReference>
<dbReference type="CCDS" id="CCDS44977.1">
    <molecule id="P30040-2"/>
</dbReference>
<dbReference type="CCDS" id="CCDS9158.1">
    <molecule id="P30040-1"/>
</dbReference>
<dbReference type="PIR" id="T09549">
    <property type="entry name" value="T09549"/>
</dbReference>
<dbReference type="RefSeq" id="NP_001029197.1">
    <molecule id="P30040-2"/>
    <property type="nucleotide sequence ID" value="NM_001034025.2"/>
</dbReference>
<dbReference type="RefSeq" id="NP_006808.1">
    <molecule id="P30040-1"/>
    <property type="nucleotide sequence ID" value="NM_006817.4"/>
</dbReference>
<dbReference type="PDB" id="2QC7">
    <property type="method" value="X-ray"/>
    <property type="resolution" value="2.90 A"/>
    <property type="chains" value="A/B=34-261"/>
</dbReference>
<dbReference type="PDB" id="5V8Z">
    <property type="method" value="X-ray"/>
    <property type="resolution" value="2.10 A"/>
    <property type="chains" value="A/C=158-261"/>
</dbReference>
<dbReference type="PDB" id="5V90">
    <property type="method" value="X-ray"/>
    <property type="resolution" value="3.25 A"/>
    <property type="chains" value="A/C=158-261"/>
</dbReference>
<dbReference type="PDBsum" id="2QC7"/>
<dbReference type="PDBsum" id="5V8Z"/>
<dbReference type="PDBsum" id="5V90"/>
<dbReference type="BMRB" id="P30040"/>
<dbReference type="SMR" id="P30040"/>
<dbReference type="BioGRID" id="116160">
    <property type="interactions" value="140"/>
</dbReference>
<dbReference type="FunCoup" id="P30040">
    <property type="interactions" value="1095"/>
</dbReference>
<dbReference type="IntAct" id="P30040">
    <property type="interactions" value="67"/>
</dbReference>
<dbReference type="STRING" id="9606.ENSP00000261735"/>
<dbReference type="GlyGen" id="P30040">
    <property type="glycosylation" value="2 sites, 7 N-linked glycans (1 site), 1 O-linked glycan (1 site)"/>
</dbReference>
<dbReference type="iPTMnet" id="P30040"/>
<dbReference type="MetOSite" id="P30040"/>
<dbReference type="PhosphoSitePlus" id="P30040"/>
<dbReference type="SwissPalm" id="P30040"/>
<dbReference type="BioMuta" id="ERP29"/>
<dbReference type="DMDM" id="6015110"/>
<dbReference type="OGP" id="P30040"/>
<dbReference type="REPRODUCTION-2DPAGE" id="IPI00024911"/>
<dbReference type="CPTAC" id="CPTAC-196"/>
<dbReference type="CPTAC" id="CPTAC-197"/>
<dbReference type="jPOST" id="P30040"/>
<dbReference type="MassIVE" id="P30040"/>
<dbReference type="PaxDb" id="9606-ENSP00000261735"/>
<dbReference type="PeptideAtlas" id="P30040"/>
<dbReference type="PRIDE" id="P30040"/>
<dbReference type="ProteomicsDB" id="54619">
    <molecule id="P30040-1"/>
</dbReference>
<dbReference type="ProteomicsDB" id="8041"/>
<dbReference type="Pumba" id="P30040"/>
<dbReference type="TopDownProteomics" id="P30040-1">
    <molecule id="P30040-1"/>
</dbReference>
<dbReference type="Antibodypedia" id="18632">
    <property type="antibodies" value="333 antibodies from 36 providers"/>
</dbReference>
<dbReference type="DNASU" id="10961"/>
<dbReference type="Ensembl" id="ENST00000261735.4">
    <molecule id="P30040-1"/>
    <property type="protein sequence ID" value="ENSP00000261735.3"/>
    <property type="gene ID" value="ENSG00000089248.7"/>
</dbReference>
<dbReference type="Ensembl" id="ENST00000455836.1">
    <molecule id="P30040-2"/>
    <property type="protein sequence ID" value="ENSP00000412083.1"/>
    <property type="gene ID" value="ENSG00000089248.7"/>
</dbReference>
<dbReference type="GeneID" id="10961"/>
<dbReference type="KEGG" id="hsa:10961"/>
<dbReference type="MANE-Select" id="ENST00000261735.4">
    <property type="protein sequence ID" value="ENSP00000261735.3"/>
    <property type="RefSeq nucleotide sequence ID" value="NM_006817.4"/>
    <property type="RefSeq protein sequence ID" value="NP_006808.1"/>
</dbReference>
<dbReference type="UCSC" id="uc001ttl.1">
    <molecule id="P30040-1"/>
    <property type="organism name" value="human"/>
</dbReference>
<dbReference type="AGR" id="HGNC:13799"/>
<dbReference type="CTD" id="10961"/>
<dbReference type="DisGeNET" id="10961"/>
<dbReference type="GeneCards" id="ERP29"/>
<dbReference type="HGNC" id="HGNC:13799">
    <property type="gene designation" value="ERP29"/>
</dbReference>
<dbReference type="HPA" id="ENSG00000089248">
    <property type="expression patterns" value="Low tissue specificity"/>
</dbReference>
<dbReference type="MIM" id="602287">
    <property type="type" value="gene"/>
</dbReference>
<dbReference type="neXtProt" id="NX_P30040"/>
<dbReference type="OpenTargets" id="ENSG00000089248"/>
<dbReference type="PharmGKB" id="PA25509"/>
<dbReference type="VEuPathDB" id="HostDB:ENSG00000089248"/>
<dbReference type="eggNOG" id="ENOG502QSHC">
    <property type="taxonomic scope" value="Eukaryota"/>
</dbReference>
<dbReference type="GeneTree" id="ENSGT00390000018566"/>
<dbReference type="HOGENOM" id="CLU_061309_1_0_1"/>
<dbReference type="InParanoid" id="P30040"/>
<dbReference type="OMA" id="FPYGDKH"/>
<dbReference type="OrthoDB" id="417262at2759"/>
<dbReference type="PAN-GO" id="P30040">
    <property type="GO annotations" value="1 GO annotation based on evolutionary models"/>
</dbReference>
<dbReference type="PhylomeDB" id="P30040"/>
<dbReference type="TreeFam" id="TF324701"/>
<dbReference type="PathwayCommons" id="P30040"/>
<dbReference type="SignaLink" id="P30040"/>
<dbReference type="BioGRID-ORCS" id="10961">
    <property type="hits" value="18 hits in 1148 CRISPR screens"/>
</dbReference>
<dbReference type="ChiTaRS" id="ERP29">
    <property type="organism name" value="human"/>
</dbReference>
<dbReference type="EvolutionaryTrace" id="P30040"/>
<dbReference type="GeneWiki" id="ERP29"/>
<dbReference type="GenomeRNAi" id="10961"/>
<dbReference type="Pharos" id="P30040">
    <property type="development level" value="Tbio"/>
</dbReference>
<dbReference type="PRO" id="PR:P30040"/>
<dbReference type="Proteomes" id="UP000005640">
    <property type="component" value="Chromosome 12"/>
</dbReference>
<dbReference type="RNAct" id="P30040">
    <property type="molecule type" value="protein"/>
</dbReference>
<dbReference type="Bgee" id="ENSG00000089248">
    <property type="expression patterns" value="Expressed in endometrium epithelium and 209 other cell types or tissues"/>
</dbReference>
<dbReference type="ExpressionAtlas" id="P30040">
    <property type="expression patterns" value="baseline and differential"/>
</dbReference>
<dbReference type="GO" id="GO:0009986">
    <property type="term" value="C:cell surface"/>
    <property type="evidence" value="ECO:0000314"/>
    <property type="project" value="MGI"/>
</dbReference>
<dbReference type="GO" id="GO:0005783">
    <property type="term" value="C:endoplasmic reticulum"/>
    <property type="evidence" value="ECO:0000314"/>
    <property type="project" value="ParkinsonsUK-UCL"/>
</dbReference>
<dbReference type="GO" id="GO:0005788">
    <property type="term" value="C:endoplasmic reticulum lumen"/>
    <property type="evidence" value="ECO:0000303"/>
    <property type="project" value="ParkinsonsUK-UCL"/>
</dbReference>
<dbReference type="GO" id="GO:0042470">
    <property type="term" value="C:melanosome"/>
    <property type="evidence" value="ECO:0007669"/>
    <property type="project" value="UniProtKB-SubCell"/>
</dbReference>
<dbReference type="GO" id="GO:0016020">
    <property type="term" value="C:membrane"/>
    <property type="evidence" value="ECO:0007005"/>
    <property type="project" value="UniProtKB"/>
</dbReference>
<dbReference type="GO" id="GO:0005790">
    <property type="term" value="C:smooth endoplasmic reticulum"/>
    <property type="evidence" value="ECO:0000250"/>
    <property type="project" value="ParkinsonsUK-UCL"/>
</dbReference>
<dbReference type="GO" id="GO:0042803">
    <property type="term" value="F:protein homodimerization activity"/>
    <property type="evidence" value="ECO:0007669"/>
    <property type="project" value="Ensembl"/>
</dbReference>
<dbReference type="GO" id="GO:0051087">
    <property type="term" value="F:protein-folding chaperone binding"/>
    <property type="evidence" value="ECO:0000250"/>
    <property type="project" value="ParkinsonsUK-UCL"/>
</dbReference>
<dbReference type="GO" id="GO:0006886">
    <property type="term" value="P:intracellular protein transport"/>
    <property type="evidence" value="ECO:0000303"/>
    <property type="project" value="ParkinsonsUK-UCL"/>
</dbReference>
<dbReference type="GO" id="GO:0010629">
    <property type="term" value="P:negative regulation of gene expression"/>
    <property type="evidence" value="ECO:0000314"/>
    <property type="project" value="ParkinsonsUK-UCL"/>
</dbReference>
<dbReference type="GO" id="GO:0050709">
    <property type="term" value="P:negative regulation of protein secretion"/>
    <property type="evidence" value="ECO:0000314"/>
    <property type="project" value="ParkinsonsUK-UCL"/>
</dbReference>
<dbReference type="GO" id="GO:0010628">
    <property type="term" value="P:positive regulation of gene expression"/>
    <property type="evidence" value="ECO:0000314"/>
    <property type="project" value="ParkinsonsUK-UCL"/>
</dbReference>
<dbReference type="GO" id="GO:0043410">
    <property type="term" value="P:positive regulation of MAPK cascade"/>
    <property type="evidence" value="ECO:0000314"/>
    <property type="project" value="ParkinsonsUK-UCL"/>
</dbReference>
<dbReference type="GO" id="GO:0006457">
    <property type="term" value="P:protein folding"/>
    <property type="evidence" value="ECO:0000303"/>
    <property type="project" value="ParkinsonsUK-UCL"/>
</dbReference>
<dbReference type="GO" id="GO:0009306">
    <property type="term" value="P:protein secretion"/>
    <property type="evidence" value="ECO:0007669"/>
    <property type="project" value="InterPro"/>
</dbReference>
<dbReference type="GO" id="GO:0043335">
    <property type="term" value="P:protein unfolding"/>
    <property type="evidence" value="ECO:0000303"/>
    <property type="project" value="ParkinsonsUK-UCL"/>
</dbReference>
<dbReference type="GO" id="GO:1902235">
    <property type="term" value="P:regulation of endoplasmic reticulum stress-induced intrinsic apoptotic signaling pathway"/>
    <property type="evidence" value="ECO:0007669"/>
    <property type="project" value="Ensembl"/>
</dbReference>
<dbReference type="CDD" id="cd00238">
    <property type="entry name" value="ERp29c"/>
    <property type="match status" value="1"/>
</dbReference>
<dbReference type="CDD" id="cd03007">
    <property type="entry name" value="PDI_a_ERp29_N"/>
    <property type="match status" value="1"/>
</dbReference>
<dbReference type="FunFam" id="1.20.1150.12:FF:000001">
    <property type="entry name" value="Endoplasmic reticulum resident protein 29"/>
    <property type="match status" value="1"/>
</dbReference>
<dbReference type="FunFam" id="3.40.30.10:FF:000133">
    <property type="entry name" value="Endoplasmic reticulum resident protein 29"/>
    <property type="match status" value="1"/>
</dbReference>
<dbReference type="Gene3D" id="1.20.1150.12">
    <property type="entry name" value="Endoplasmic reticulum resident protein 29, C-terminal domain"/>
    <property type="match status" value="1"/>
</dbReference>
<dbReference type="Gene3D" id="3.40.30.10">
    <property type="entry name" value="Glutaredoxin"/>
    <property type="match status" value="1"/>
</dbReference>
<dbReference type="InterPro" id="IPR016855">
    <property type="entry name" value="ERp29"/>
</dbReference>
<dbReference type="InterPro" id="IPR011679">
    <property type="entry name" value="ERp29_C"/>
</dbReference>
<dbReference type="InterPro" id="IPR036356">
    <property type="entry name" value="ERp29_C_sf"/>
</dbReference>
<dbReference type="InterPro" id="IPR012883">
    <property type="entry name" value="ERp29_N"/>
</dbReference>
<dbReference type="InterPro" id="IPR036249">
    <property type="entry name" value="Thioredoxin-like_sf"/>
</dbReference>
<dbReference type="PANTHER" id="PTHR12211">
    <property type="entry name" value="ENDOPLASMIC RETICULUM PROTEIN ERP29"/>
    <property type="match status" value="1"/>
</dbReference>
<dbReference type="PANTHER" id="PTHR12211:SF1">
    <property type="entry name" value="ENDOPLASMIC RETICULUM RESIDENT PROTEIN 29"/>
    <property type="match status" value="1"/>
</dbReference>
<dbReference type="Pfam" id="PF07749">
    <property type="entry name" value="ERp29"/>
    <property type="match status" value="1"/>
</dbReference>
<dbReference type="Pfam" id="PF07912">
    <property type="entry name" value="ERp29_N"/>
    <property type="match status" value="1"/>
</dbReference>
<dbReference type="PIRSF" id="PIRSF027352">
    <property type="entry name" value="ER_p29"/>
    <property type="match status" value="1"/>
</dbReference>
<dbReference type="SUPFAM" id="SSF47933">
    <property type="entry name" value="ERP29 C domain-like"/>
    <property type="match status" value="1"/>
</dbReference>
<dbReference type="SUPFAM" id="SSF52833">
    <property type="entry name" value="Thioredoxin-like"/>
    <property type="match status" value="1"/>
</dbReference>
<dbReference type="PROSITE" id="PS00014">
    <property type="entry name" value="ER_TARGET"/>
    <property type="match status" value="1"/>
</dbReference>
<name>ERP29_HUMAN</name>